<dbReference type="EC" id="1.2.1.41" evidence="1"/>
<dbReference type="EMBL" id="CP001056">
    <property type="protein sequence ID" value="ACD23938.1"/>
    <property type="molecule type" value="Genomic_DNA"/>
</dbReference>
<dbReference type="SMR" id="B2THG5"/>
<dbReference type="KEGG" id="cbk:CLL_A0063"/>
<dbReference type="PATRIC" id="fig|935198.13.peg.54"/>
<dbReference type="HOGENOM" id="CLU_030231_0_0_9"/>
<dbReference type="UniPathway" id="UPA00098">
    <property type="reaction ID" value="UER00360"/>
</dbReference>
<dbReference type="Proteomes" id="UP000001195">
    <property type="component" value="Chromosome"/>
</dbReference>
<dbReference type="GO" id="GO:0005737">
    <property type="term" value="C:cytoplasm"/>
    <property type="evidence" value="ECO:0007669"/>
    <property type="project" value="UniProtKB-SubCell"/>
</dbReference>
<dbReference type="GO" id="GO:0004350">
    <property type="term" value="F:glutamate-5-semialdehyde dehydrogenase activity"/>
    <property type="evidence" value="ECO:0007669"/>
    <property type="project" value="UniProtKB-UniRule"/>
</dbReference>
<dbReference type="GO" id="GO:0050661">
    <property type="term" value="F:NADP binding"/>
    <property type="evidence" value="ECO:0007669"/>
    <property type="project" value="InterPro"/>
</dbReference>
<dbReference type="GO" id="GO:0055129">
    <property type="term" value="P:L-proline biosynthetic process"/>
    <property type="evidence" value="ECO:0007669"/>
    <property type="project" value="UniProtKB-UniRule"/>
</dbReference>
<dbReference type="CDD" id="cd07079">
    <property type="entry name" value="ALDH_F18-19_ProA-GPR"/>
    <property type="match status" value="1"/>
</dbReference>
<dbReference type="FunFam" id="3.40.309.10:FF:000006">
    <property type="entry name" value="Gamma-glutamyl phosphate reductase"/>
    <property type="match status" value="1"/>
</dbReference>
<dbReference type="Gene3D" id="3.40.605.10">
    <property type="entry name" value="Aldehyde Dehydrogenase, Chain A, domain 1"/>
    <property type="match status" value="1"/>
</dbReference>
<dbReference type="Gene3D" id="3.40.309.10">
    <property type="entry name" value="Aldehyde Dehydrogenase, Chain A, domain 2"/>
    <property type="match status" value="1"/>
</dbReference>
<dbReference type="HAMAP" id="MF_00412">
    <property type="entry name" value="ProA"/>
    <property type="match status" value="1"/>
</dbReference>
<dbReference type="InterPro" id="IPR016161">
    <property type="entry name" value="Ald_DH/histidinol_DH"/>
</dbReference>
<dbReference type="InterPro" id="IPR016163">
    <property type="entry name" value="Ald_DH_C"/>
</dbReference>
<dbReference type="InterPro" id="IPR016162">
    <property type="entry name" value="Ald_DH_N"/>
</dbReference>
<dbReference type="InterPro" id="IPR015590">
    <property type="entry name" value="Aldehyde_DH_dom"/>
</dbReference>
<dbReference type="InterPro" id="IPR020593">
    <property type="entry name" value="G-glutamylP_reductase_CS"/>
</dbReference>
<dbReference type="InterPro" id="IPR012134">
    <property type="entry name" value="Glu-5-SA_DH"/>
</dbReference>
<dbReference type="InterPro" id="IPR000965">
    <property type="entry name" value="GPR_dom"/>
</dbReference>
<dbReference type="NCBIfam" id="NF001221">
    <property type="entry name" value="PRK00197.1"/>
    <property type="match status" value="1"/>
</dbReference>
<dbReference type="NCBIfam" id="TIGR00407">
    <property type="entry name" value="proA"/>
    <property type="match status" value="1"/>
</dbReference>
<dbReference type="PANTHER" id="PTHR11063:SF8">
    <property type="entry name" value="DELTA-1-PYRROLINE-5-CARBOXYLATE SYNTHASE"/>
    <property type="match status" value="1"/>
</dbReference>
<dbReference type="PANTHER" id="PTHR11063">
    <property type="entry name" value="GLUTAMATE SEMIALDEHYDE DEHYDROGENASE"/>
    <property type="match status" value="1"/>
</dbReference>
<dbReference type="Pfam" id="PF00171">
    <property type="entry name" value="Aldedh"/>
    <property type="match status" value="2"/>
</dbReference>
<dbReference type="PIRSF" id="PIRSF000151">
    <property type="entry name" value="GPR"/>
    <property type="match status" value="1"/>
</dbReference>
<dbReference type="SUPFAM" id="SSF53720">
    <property type="entry name" value="ALDH-like"/>
    <property type="match status" value="1"/>
</dbReference>
<dbReference type="PROSITE" id="PS01223">
    <property type="entry name" value="PROA"/>
    <property type="match status" value="1"/>
</dbReference>
<comment type="function">
    <text evidence="1">Catalyzes the NADPH-dependent reduction of L-glutamate 5-phosphate into L-glutamate 5-semialdehyde and phosphate. The product spontaneously undergoes cyclization to form 1-pyrroline-5-carboxylate.</text>
</comment>
<comment type="catalytic activity">
    <reaction evidence="1">
        <text>L-glutamate 5-semialdehyde + phosphate + NADP(+) = L-glutamyl 5-phosphate + NADPH + H(+)</text>
        <dbReference type="Rhea" id="RHEA:19541"/>
        <dbReference type="ChEBI" id="CHEBI:15378"/>
        <dbReference type="ChEBI" id="CHEBI:43474"/>
        <dbReference type="ChEBI" id="CHEBI:57783"/>
        <dbReference type="ChEBI" id="CHEBI:58066"/>
        <dbReference type="ChEBI" id="CHEBI:58274"/>
        <dbReference type="ChEBI" id="CHEBI:58349"/>
        <dbReference type="EC" id="1.2.1.41"/>
    </reaction>
</comment>
<comment type="pathway">
    <text evidence="1">Amino-acid biosynthesis; L-proline biosynthesis; L-glutamate 5-semialdehyde from L-glutamate: step 2/2.</text>
</comment>
<comment type="subcellular location">
    <subcellularLocation>
        <location evidence="1">Cytoplasm</location>
    </subcellularLocation>
</comment>
<comment type="similarity">
    <text evidence="1">Belongs to the gamma-glutamyl phosphate reductase family.</text>
</comment>
<keyword id="KW-0028">Amino-acid biosynthesis</keyword>
<keyword id="KW-0963">Cytoplasm</keyword>
<keyword id="KW-0521">NADP</keyword>
<keyword id="KW-0560">Oxidoreductase</keyword>
<keyword id="KW-0641">Proline biosynthesis</keyword>
<evidence type="ECO:0000255" key="1">
    <source>
        <dbReference type="HAMAP-Rule" id="MF_00412"/>
    </source>
</evidence>
<accession>B2THG5</accession>
<protein>
    <recommendedName>
        <fullName evidence="1">Gamma-glutamyl phosphate reductase</fullName>
        <shortName evidence="1">GPR</shortName>
        <ecNumber evidence="1">1.2.1.41</ecNumber>
    </recommendedName>
    <alternativeName>
        <fullName evidence="1">Glutamate-5-semialdehyde dehydrogenase</fullName>
    </alternativeName>
    <alternativeName>
        <fullName evidence="1">Glutamyl-gamma-semialdehyde dehydrogenase</fullName>
        <shortName evidence="1">GSA dehydrogenase</shortName>
    </alternativeName>
</protein>
<organism>
    <name type="scientific">Clostridium botulinum (strain Eklund 17B / Type B)</name>
    <dbReference type="NCBI Taxonomy" id="935198"/>
    <lineage>
        <taxon>Bacteria</taxon>
        <taxon>Bacillati</taxon>
        <taxon>Bacillota</taxon>
        <taxon>Clostridia</taxon>
        <taxon>Eubacteriales</taxon>
        <taxon>Clostridiaceae</taxon>
        <taxon>Clostridium</taxon>
    </lineage>
</organism>
<feature type="chain" id="PRO_1000193588" description="Gamma-glutamyl phosphate reductase">
    <location>
        <begin position="1"/>
        <end position="414"/>
    </location>
</feature>
<gene>
    <name evidence="1" type="primary">proA</name>
    <name type="ordered locus">CLL_A0063</name>
</gene>
<name>PROA_CLOBB</name>
<sequence length="414" mass="45716">MKELILKGERAKEASYVLMNATTSEKNDALIKMGQKLLENKEYIIAENKKDLENAMLKGTSKAMLDRLYLDEKRLEDMADGLNQLVNLNDPIGEVITMWKRPNGLQIGKQRVPMGVIGIIYEARPNVTCDAAGLCLKAGNAVILRGGSEAINSNKAIVKALCEGIKESGLPEYSLQLIENTSREIANEMMRLNEYIDVLIPRGGAGLIQAVVKNATVPVIETGVGNCHVYVDEEADFKMAEDIIINAKTSRPAVCNAEEKLLVNEKIAEEFLPKIISALREKNVEVRGDSSVMKIVDDVKEATDEDWGKEYLDFIIGIKIVNNIDEAIKHINKYGSGHSEAIITNNYQNSQKFLQRVDAAAVYVNASTRFTDGCEFGFGAEIGISTQKLHARGPMGLNELTTTKYIIYGNGQIR</sequence>
<proteinExistence type="inferred from homology"/>
<reference key="1">
    <citation type="submission" date="2008-04" db="EMBL/GenBank/DDBJ databases">
        <title>Complete sequence of Clostridium botulinum strain Eklund.</title>
        <authorList>
            <person name="Brinkac L.M."/>
            <person name="Brown J.L."/>
            <person name="Bruce D."/>
            <person name="Detter C."/>
            <person name="Munk C."/>
            <person name="Smith L.A."/>
            <person name="Smith T.J."/>
            <person name="Sutton G."/>
            <person name="Brettin T.S."/>
        </authorList>
    </citation>
    <scope>NUCLEOTIDE SEQUENCE [LARGE SCALE GENOMIC DNA]</scope>
    <source>
        <strain>Eklund 17B / Type B</strain>
    </source>
</reference>